<protein>
    <recommendedName>
        <fullName>Nucleolar and spindle-associated protein 1-B</fullName>
        <shortName>NuSAP B</shortName>
    </recommendedName>
</protein>
<keyword id="KW-0131">Cell cycle</keyword>
<keyword id="KW-0132">Cell division</keyword>
<keyword id="KW-0963">Cytoplasm</keyword>
<keyword id="KW-0206">Cytoskeleton</keyword>
<keyword id="KW-0238">DNA-binding</keyword>
<keyword id="KW-0469">Meiosis</keyword>
<keyword id="KW-0493">Microtubule</keyword>
<keyword id="KW-0498">Mitosis</keyword>
<keyword id="KW-0539">Nucleus</keyword>
<keyword id="KW-1185">Reference proteome</keyword>
<accession>A0JMZ1</accession>
<comment type="function">
    <text evidence="1">Microtubule-associated protein with the capacity to bundle and stabilize microtubules. May associate with chromosomes and promote the organization of meiotic or mitotic spindle microtubules around them (By similarity).</text>
</comment>
<comment type="subunit">
    <text evidence="1">Interacts with DNA, microtubules, ipo7, kpna2 and kpnb1. Microtubule stabilization is inhibited by ipo7 and kpna2, while microtubule bundling is inhibited by kpnb1. Active GTP-bound ran causes dissociation of ipo7 and kpnb1 (By similarity).</text>
</comment>
<comment type="subcellular location">
    <subcellularLocation>
        <location evidence="1">Cytoplasm</location>
    </subcellularLocation>
    <subcellularLocation>
        <location evidence="1">Nucleus</location>
    </subcellularLocation>
    <subcellularLocation>
        <location evidence="1">Cytoplasm</location>
        <location evidence="1">Cytoskeleton</location>
        <location evidence="1">Spindle</location>
    </subcellularLocation>
    <text evidence="1">Associates with meiotic or mitotic spindle microtubules, particularly in the vicinity of chromosomes.</text>
</comment>
<comment type="similarity">
    <text evidence="3">Belongs to the NUSAP family.</text>
</comment>
<comment type="sequence caution" evidence="3">
    <conflict type="erroneous initiation">
        <sequence resource="EMBL-CDS" id="AAI26058"/>
    </conflict>
</comment>
<proteinExistence type="evidence at transcript level"/>
<reference key="1">
    <citation type="submission" date="2006-10" db="EMBL/GenBank/DDBJ databases">
        <authorList>
            <consortium name="NIH - Xenopus Gene Collection (XGC) project"/>
        </authorList>
    </citation>
    <scope>NUCLEOTIDE SEQUENCE [LARGE SCALE MRNA]</scope>
    <source>
        <tissue>Oocyte</tissue>
    </source>
</reference>
<name>NSAPB_XENLA</name>
<gene>
    <name type="primary">nusap1-b</name>
</gene>
<sequence length="496" mass="55446">MDAPTLSELEGLRYSELQKLAKTAGLKANLKADKLLKALKVHFYPESKDESPDSDGCTSLTDTDELNSSQEKEEPVSVSFVTHRRGRGRKPLQNQAIPKDEFLSDSAGVGSESLASEIDNTQDKDCLESKKKEVSLPILDNKHKKRSRSQDTSKQNNSETTEKRQKKASNVSSIPSAGKIPRYVGRLSKPGSKPSTPNFKKLHEAHFKKMESIDKFMERKQKRLDAVSSSIQEVKMLTKKSNLLKLVEKTPVSDIKKPVKSRLSLLSPLPRTTGASPSRTPMSRRRSGRFSTANKSILVDRSGFKPSVLSSSKMNVRFSEATKDNEYKRSLIKTPARKSSSFLPITPKSEPRQTLSSIKKTDLLTSPEKAKKPDHNTTIQPSPAITESPCQQNKANTPFKFMAQNTETPNTNKKGSFDLQASLSRPLGYQPHRGKLKPWGESKENKSGSNSNVSVLKNNFKQPQLQTREERRKQHELDRKGKRDQALGTRRGVPVK</sequence>
<organism>
    <name type="scientific">Xenopus laevis</name>
    <name type="common">African clawed frog</name>
    <dbReference type="NCBI Taxonomy" id="8355"/>
    <lineage>
        <taxon>Eukaryota</taxon>
        <taxon>Metazoa</taxon>
        <taxon>Chordata</taxon>
        <taxon>Craniata</taxon>
        <taxon>Vertebrata</taxon>
        <taxon>Euteleostomi</taxon>
        <taxon>Amphibia</taxon>
        <taxon>Batrachia</taxon>
        <taxon>Anura</taxon>
        <taxon>Pipoidea</taxon>
        <taxon>Pipidae</taxon>
        <taxon>Xenopodinae</taxon>
        <taxon>Xenopus</taxon>
        <taxon>Xenopus</taxon>
    </lineage>
</organism>
<evidence type="ECO:0000250" key="1"/>
<evidence type="ECO:0000256" key="2">
    <source>
        <dbReference type="SAM" id="MobiDB-lite"/>
    </source>
</evidence>
<evidence type="ECO:0000305" key="3"/>
<dbReference type="EMBL" id="BC126057">
    <property type="protein sequence ID" value="AAI26058.1"/>
    <property type="status" value="ALT_INIT"/>
    <property type="molecule type" value="mRNA"/>
</dbReference>
<dbReference type="AGR" id="Xenbase:XB-GENE-6256496"/>
<dbReference type="Xenbase" id="XB-GENE-6256496">
    <property type="gene designation" value="nusap1.L"/>
</dbReference>
<dbReference type="Proteomes" id="UP000186698">
    <property type="component" value="Unplaced"/>
</dbReference>
<dbReference type="GO" id="GO:0005737">
    <property type="term" value="C:cytoplasm"/>
    <property type="evidence" value="ECO:0007669"/>
    <property type="project" value="UniProtKB-SubCell"/>
</dbReference>
<dbReference type="GO" id="GO:0005874">
    <property type="term" value="C:microtubule"/>
    <property type="evidence" value="ECO:0007669"/>
    <property type="project" value="UniProtKB-KW"/>
</dbReference>
<dbReference type="GO" id="GO:0072686">
    <property type="term" value="C:mitotic spindle"/>
    <property type="evidence" value="ECO:0000318"/>
    <property type="project" value="GO_Central"/>
</dbReference>
<dbReference type="GO" id="GO:0005730">
    <property type="term" value="C:nucleolus"/>
    <property type="evidence" value="ECO:0000318"/>
    <property type="project" value="GO_Central"/>
</dbReference>
<dbReference type="GO" id="GO:0003677">
    <property type="term" value="F:DNA binding"/>
    <property type="evidence" value="ECO:0007669"/>
    <property type="project" value="UniProtKB-KW"/>
</dbReference>
<dbReference type="GO" id="GO:0008017">
    <property type="term" value="F:microtubule binding"/>
    <property type="evidence" value="ECO:0000318"/>
    <property type="project" value="GO_Central"/>
</dbReference>
<dbReference type="GO" id="GO:0040001">
    <property type="term" value="P:establishment of mitotic spindle localization"/>
    <property type="evidence" value="ECO:0000318"/>
    <property type="project" value="GO_Central"/>
</dbReference>
<dbReference type="GO" id="GO:0051321">
    <property type="term" value="P:meiotic cell cycle"/>
    <property type="evidence" value="ECO:0007669"/>
    <property type="project" value="UniProtKB-KW"/>
</dbReference>
<dbReference type="GO" id="GO:0007076">
    <property type="term" value="P:mitotic chromosome condensation"/>
    <property type="evidence" value="ECO:0000318"/>
    <property type="project" value="GO_Central"/>
</dbReference>
<dbReference type="GO" id="GO:0000281">
    <property type="term" value="P:mitotic cytokinesis"/>
    <property type="evidence" value="ECO:0000318"/>
    <property type="project" value="GO_Central"/>
</dbReference>
<dbReference type="InterPro" id="IPR026756">
    <property type="entry name" value="NuSAP"/>
</dbReference>
<dbReference type="PANTHER" id="PTHR15874">
    <property type="entry name" value="NUCLEOLAR AND SPINDLE-ASSOCIATED PROTEIN 1"/>
    <property type="match status" value="1"/>
</dbReference>
<dbReference type="PANTHER" id="PTHR15874:SF1">
    <property type="entry name" value="NUCLEOLAR AND SPINDLE-ASSOCIATED PROTEIN 1"/>
    <property type="match status" value="1"/>
</dbReference>
<dbReference type="Pfam" id="PF16006">
    <property type="entry name" value="NUSAP"/>
    <property type="match status" value="1"/>
</dbReference>
<feature type="chain" id="PRO_0000302039" description="Nucleolar and spindle-associated protein 1-B">
    <location>
        <begin position="1"/>
        <end position="496"/>
    </location>
</feature>
<feature type="region of interest" description="Disordered" evidence="2">
    <location>
        <begin position="44"/>
        <end position="206"/>
    </location>
</feature>
<feature type="region of interest" description="Disordered" evidence="2">
    <location>
        <begin position="250"/>
        <end position="294"/>
    </location>
</feature>
<feature type="region of interest" description="Disordered" evidence="2">
    <location>
        <begin position="338"/>
        <end position="496"/>
    </location>
</feature>
<feature type="compositionally biased region" description="Polar residues" evidence="2">
    <location>
        <begin position="56"/>
        <end position="69"/>
    </location>
</feature>
<feature type="compositionally biased region" description="Basic and acidic residues" evidence="2">
    <location>
        <begin position="121"/>
        <end position="134"/>
    </location>
</feature>
<feature type="compositionally biased region" description="Polar residues" evidence="2">
    <location>
        <begin position="150"/>
        <end position="159"/>
    </location>
</feature>
<feature type="compositionally biased region" description="Low complexity" evidence="2">
    <location>
        <begin position="261"/>
        <end position="281"/>
    </location>
</feature>
<feature type="compositionally biased region" description="Polar residues" evidence="2">
    <location>
        <begin position="376"/>
        <end position="396"/>
    </location>
</feature>
<feature type="compositionally biased region" description="Polar residues" evidence="2">
    <location>
        <begin position="403"/>
        <end position="423"/>
    </location>
</feature>
<feature type="compositionally biased region" description="Low complexity" evidence="2">
    <location>
        <begin position="447"/>
        <end position="459"/>
    </location>
</feature>
<feature type="compositionally biased region" description="Basic and acidic residues" evidence="2">
    <location>
        <begin position="467"/>
        <end position="485"/>
    </location>
</feature>